<reference key="1">
    <citation type="journal article" date="2000" name="Nature">
        <title>DNA sequence of both chromosomes of the cholera pathogen Vibrio cholerae.</title>
        <authorList>
            <person name="Heidelberg J.F."/>
            <person name="Eisen J.A."/>
            <person name="Nelson W.C."/>
            <person name="Clayton R.A."/>
            <person name="Gwinn M.L."/>
            <person name="Dodson R.J."/>
            <person name="Haft D.H."/>
            <person name="Hickey E.K."/>
            <person name="Peterson J.D."/>
            <person name="Umayam L.A."/>
            <person name="Gill S.R."/>
            <person name="Nelson K.E."/>
            <person name="Read T.D."/>
            <person name="Tettelin H."/>
            <person name="Richardson D.L."/>
            <person name="Ermolaeva M.D."/>
            <person name="Vamathevan J.J."/>
            <person name="Bass S."/>
            <person name="Qin H."/>
            <person name="Dragoi I."/>
            <person name="Sellers P."/>
            <person name="McDonald L.A."/>
            <person name="Utterback T.R."/>
            <person name="Fleischmann R.D."/>
            <person name="Nierman W.C."/>
            <person name="White O."/>
            <person name="Salzberg S.L."/>
            <person name="Smith H.O."/>
            <person name="Colwell R.R."/>
            <person name="Mekalanos J.J."/>
            <person name="Venter J.C."/>
            <person name="Fraser C.M."/>
        </authorList>
    </citation>
    <scope>NUCLEOTIDE SEQUENCE [LARGE SCALE GENOMIC DNA]</scope>
    <source>
        <strain>ATCC 39315 / El Tor Inaba N16961</strain>
    </source>
</reference>
<evidence type="ECO:0000255" key="1">
    <source>
        <dbReference type="HAMAP-Rule" id="MF_00297"/>
    </source>
</evidence>
<evidence type="ECO:0000305" key="2"/>
<feature type="chain" id="PRO_0000056978" description="NAD-capped RNA hydrolase NudC">
    <location>
        <begin position="1"/>
        <end position="269"/>
    </location>
</feature>
<feature type="domain" description="Nudix hydrolase" evidence="1">
    <location>
        <begin position="137"/>
        <end position="260"/>
    </location>
</feature>
<feature type="short sequence motif" description="Nudix box" evidence="1">
    <location>
        <begin position="171"/>
        <end position="192"/>
    </location>
</feature>
<feature type="binding site" evidence="1">
    <location>
        <position position="81"/>
    </location>
    <ligand>
        <name>substrate</name>
    </ligand>
</feature>
<feature type="binding site" evidence="1">
    <location>
        <position position="110"/>
    </location>
    <ligand>
        <name>Zn(2+)</name>
        <dbReference type="ChEBI" id="CHEBI:29105"/>
    </ligand>
</feature>
<feature type="binding site" evidence="1">
    <location>
        <position position="113"/>
    </location>
    <ligand>
        <name>Zn(2+)</name>
        <dbReference type="ChEBI" id="CHEBI:29105"/>
    </ligand>
</feature>
<feature type="binding site" evidence="1">
    <location>
        <position position="128"/>
    </location>
    <ligand>
        <name>Zn(2+)</name>
        <dbReference type="ChEBI" id="CHEBI:29105"/>
    </ligand>
</feature>
<feature type="binding site" evidence="1">
    <location>
        <position position="131"/>
    </location>
    <ligand>
        <name>Zn(2+)</name>
        <dbReference type="ChEBI" id="CHEBI:29105"/>
    </ligand>
</feature>
<feature type="binding site" evidence="1">
    <location>
        <position position="136"/>
    </location>
    <ligand>
        <name>substrate</name>
    </ligand>
</feature>
<feature type="binding site" evidence="1">
    <location>
        <position position="170"/>
    </location>
    <ligand>
        <name>a divalent metal cation</name>
        <dbReference type="ChEBI" id="CHEBI:60240"/>
        <label>1</label>
    </ligand>
</feature>
<feature type="binding site" evidence="1">
    <location>
        <position position="186"/>
    </location>
    <ligand>
        <name>a divalent metal cation</name>
        <dbReference type="ChEBI" id="CHEBI:60240"/>
        <label>2</label>
    </ligand>
</feature>
<feature type="binding site" evidence="1">
    <location>
        <position position="186"/>
    </location>
    <ligand>
        <name>a divalent metal cation</name>
        <dbReference type="ChEBI" id="CHEBI:60240"/>
        <label>3</label>
    </ligand>
</feature>
<feature type="binding site" evidence="1">
    <location>
        <position position="190"/>
    </location>
    <ligand>
        <name>a divalent metal cation</name>
        <dbReference type="ChEBI" id="CHEBI:60240"/>
        <label>1</label>
    </ligand>
</feature>
<feature type="binding site" evidence="1">
    <location>
        <position position="190"/>
    </location>
    <ligand>
        <name>a divalent metal cation</name>
        <dbReference type="ChEBI" id="CHEBI:60240"/>
        <label>3</label>
    </ligand>
</feature>
<feature type="binding site" evidence="1">
    <location>
        <begin position="204"/>
        <end position="211"/>
    </location>
    <ligand>
        <name>substrate</name>
    </ligand>
</feature>
<feature type="binding site" evidence="1">
    <location>
        <position position="231"/>
    </location>
    <ligand>
        <name>a divalent metal cation</name>
        <dbReference type="ChEBI" id="CHEBI:60240"/>
        <label>1</label>
    </ligand>
</feature>
<feature type="binding site" evidence="1">
    <location>
        <position position="231"/>
    </location>
    <ligand>
        <name>a divalent metal cation</name>
        <dbReference type="ChEBI" id="CHEBI:60240"/>
        <label>3</label>
    </ligand>
</feature>
<feature type="binding site" evidence="1">
    <location>
        <position position="253"/>
    </location>
    <ligand>
        <name>substrate</name>
    </ligand>
</feature>
<dbReference type="EC" id="3.6.1.-" evidence="1"/>
<dbReference type="EC" id="3.6.1.22" evidence="1"/>
<dbReference type="EMBL" id="AE003852">
    <property type="protein sequence ID" value="AAF93504.1"/>
    <property type="molecule type" value="Genomic_DNA"/>
</dbReference>
<dbReference type="PIR" id="B82335">
    <property type="entry name" value="B82335"/>
</dbReference>
<dbReference type="RefSeq" id="NP_229985.1">
    <property type="nucleotide sequence ID" value="NC_002505.1"/>
</dbReference>
<dbReference type="SMR" id="Q9KV27"/>
<dbReference type="STRING" id="243277.VC_0331"/>
<dbReference type="DNASU" id="2615097"/>
<dbReference type="EnsemblBacteria" id="AAF93504">
    <property type="protein sequence ID" value="AAF93504"/>
    <property type="gene ID" value="VC_0331"/>
</dbReference>
<dbReference type="KEGG" id="vch:VC_0331"/>
<dbReference type="PATRIC" id="fig|243277.26.peg.308"/>
<dbReference type="eggNOG" id="COG2816">
    <property type="taxonomic scope" value="Bacteria"/>
</dbReference>
<dbReference type="HOGENOM" id="CLU_037162_0_1_6"/>
<dbReference type="Proteomes" id="UP000000584">
    <property type="component" value="Chromosome 1"/>
</dbReference>
<dbReference type="GO" id="GO:0000287">
    <property type="term" value="F:magnesium ion binding"/>
    <property type="evidence" value="ECO:0007669"/>
    <property type="project" value="UniProtKB-UniRule"/>
</dbReference>
<dbReference type="GO" id="GO:0030145">
    <property type="term" value="F:manganese ion binding"/>
    <property type="evidence" value="ECO:0007669"/>
    <property type="project" value="UniProtKB-UniRule"/>
</dbReference>
<dbReference type="GO" id="GO:0000210">
    <property type="term" value="F:NAD+ diphosphatase activity"/>
    <property type="evidence" value="ECO:0007669"/>
    <property type="project" value="UniProtKB-UniRule"/>
</dbReference>
<dbReference type="GO" id="GO:0035529">
    <property type="term" value="F:NADH pyrophosphatase activity"/>
    <property type="evidence" value="ECO:0000318"/>
    <property type="project" value="GO_Central"/>
</dbReference>
<dbReference type="GO" id="GO:0110153">
    <property type="term" value="F:RNA NAD-cap (NMN-forming) hydrolase activity"/>
    <property type="evidence" value="ECO:0007669"/>
    <property type="project" value="RHEA"/>
</dbReference>
<dbReference type="GO" id="GO:0008270">
    <property type="term" value="F:zinc ion binding"/>
    <property type="evidence" value="ECO:0007669"/>
    <property type="project" value="UniProtKB-UniRule"/>
</dbReference>
<dbReference type="GO" id="GO:0019677">
    <property type="term" value="P:NAD catabolic process"/>
    <property type="evidence" value="ECO:0000318"/>
    <property type="project" value="GO_Central"/>
</dbReference>
<dbReference type="GO" id="GO:0006734">
    <property type="term" value="P:NADH metabolic process"/>
    <property type="evidence" value="ECO:0000318"/>
    <property type="project" value="GO_Central"/>
</dbReference>
<dbReference type="GO" id="GO:0006742">
    <property type="term" value="P:NADP catabolic process"/>
    <property type="evidence" value="ECO:0000318"/>
    <property type="project" value="GO_Central"/>
</dbReference>
<dbReference type="CDD" id="cd03429">
    <property type="entry name" value="NUDIX_NADH_pyrophosphatase_Nudt13"/>
    <property type="match status" value="1"/>
</dbReference>
<dbReference type="FunFam" id="3.90.79.10:FF:000004">
    <property type="entry name" value="NADH pyrophosphatase"/>
    <property type="match status" value="1"/>
</dbReference>
<dbReference type="Gene3D" id="3.90.79.20">
    <property type="match status" value="1"/>
</dbReference>
<dbReference type="Gene3D" id="3.90.79.10">
    <property type="entry name" value="Nucleoside Triphosphate Pyrophosphohydrolase"/>
    <property type="match status" value="1"/>
</dbReference>
<dbReference type="HAMAP" id="MF_00297">
    <property type="entry name" value="Nudix_NudC"/>
    <property type="match status" value="1"/>
</dbReference>
<dbReference type="InterPro" id="IPR050241">
    <property type="entry name" value="NAD-cap_RNA_hydrolase_NudC"/>
</dbReference>
<dbReference type="InterPro" id="IPR049734">
    <property type="entry name" value="NudC-like_C"/>
</dbReference>
<dbReference type="InterPro" id="IPR015797">
    <property type="entry name" value="NUDIX_hydrolase-like_dom_sf"/>
</dbReference>
<dbReference type="InterPro" id="IPR020084">
    <property type="entry name" value="NUDIX_hydrolase_CS"/>
</dbReference>
<dbReference type="InterPro" id="IPR000086">
    <property type="entry name" value="NUDIX_hydrolase_dom"/>
</dbReference>
<dbReference type="InterPro" id="IPR022925">
    <property type="entry name" value="RNA_Hydrolase_NudC"/>
</dbReference>
<dbReference type="InterPro" id="IPR015376">
    <property type="entry name" value="Znr_NADH_PPase"/>
</dbReference>
<dbReference type="NCBIfam" id="NF001299">
    <property type="entry name" value="PRK00241.1"/>
    <property type="match status" value="1"/>
</dbReference>
<dbReference type="PANTHER" id="PTHR42904:SF6">
    <property type="entry name" value="NAD-CAPPED RNA HYDROLASE NUDT12"/>
    <property type="match status" value="1"/>
</dbReference>
<dbReference type="PANTHER" id="PTHR42904">
    <property type="entry name" value="NUDIX HYDROLASE, NUDC SUBFAMILY"/>
    <property type="match status" value="1"/>
</dbReference>
<dbReference type="Pfam" id="PF00293">
    <property type="entry name" value="NUDIX"/>
    <property type="match status" value="1"/>
</dbReference>
<dbReference type="Pfam" id="PF09297">
    <property type="entry name" value="Zn_ribbon_NUD"/>
    <property type="match status" value="1"/>
</dbReference>
<dbReference type="SUPFAM" id="SSF55811">
    <property type="entry name" value="Nudix"/>
    <property type="match status" value="1"/>
</dbReference>
<dbReference type="PROSITE" id="PS51462">
    <property type="entry name" value="NUDIX"/>
    <property type="match status" value="1"/>
</dbReference>
<dbReference type="PROSITE" id="PS00893">
    <property type="entry name" value="NUDIX_BOX"/>
    <property type="match status" value="1"/>
</dbReference>
<organism>
    <name type="scientific">Vibrio cholerae serotype O1 (strain ATCC 39315 / El Tor Inaba N16961)</name>
    <dbReference type="NCBI Taxonomy" id="243277"/>
    <lineage>
        <taxon>Bacteria</taxon>
        <taxon>Pseudomonadati</taxon>
        <taxon>Pseudomonadota</taxon>
        <taxon>Gammaproteobacteria</taxon>
        <taxon>Vibrionales</taxon>
        <taxon>Vibrionaceae</taxon>
        <taxon>Vibrio</taxon>
    </lineage>
</organism>
<sequence length="269" mass="30478">MIRLQAIRRSRVEKSDGKNAYWCVVSGSDLWLVDGQIPYGSAEQWDLPQEKAILVDRYQNSPVYWLNAADIEQDRPLTSLRELLGVDEALFLAASKAVQYGHMSQTIRFCPQCGGRNYLNHQQLAMQCHDCRTLHYPRIFPCIIVAVRKQQQILLAQHPRHRNGMYTVIAGFVEVGETLEQCVAREVLEETGIVVTNIRYFGSQPWAFPSSMMMAFLADYDTGELKPDYSELSDANWFGIENLPPVAPRGTIARALIEQTLADIAQDQA</sequence>
<proteinExistence type="inferred from homology"/>
<keyword id="KW-0378">Hydrolase</keyword>
<keyword id="KW-0460">Magnesium</keyword>
<keyword id="KW-0464">Manganese</keyword>
<keyword id="KW-0479">Metal-binding</keyword>
<keyword id="KW-0520">NAD</keyword>
<keyword id="KW-1185">Reference proteome</keyword>
<keyword id="KW-0862">Zinc</keyword>
<comment type="function">
    <text evidence="1">mRNA decapping enzyme that specifically removes the nicotinamide adenine dinucleotide (NAD) cap from a subset of mRNAs by hydrolyzing the diphosphate linkage to produce nicotinamide mononucleotide (NMN) and 5' monophosphate mRNA. The NAD-cap is present at the 5'-end of some mRNAs and stabilizes RNA against 5'-processing. Has preference for mRNAs with a 5'-end purine. Catalyzes the hydrolysis of a broad range of dinucleotide pyrophosphates.</text>
</comment>
<comment type="catalytic activity">
    <reaction evidence="1">
        <text>a 5'-end NAD(+)-phospho-ribonucleoside in mRNA + H2O = a 5'-end phospho-adenosine-phospho-ribonucleoside in mRNA + beta-nicotinamide D-ribonucleotide + 2 H(+)</text>
        <dbReference type="Rhea" id="RHEA:60876"/>
        <dbReference type="Rhea" id="RHEA-COMP:15698"/>
        <dbReference type="Rhea" id="RHEA-COMP:15719"/>
        <dbReference type="ChEBI" id="CHEBI:14649"/>
        <dbReference type="ChEBI" id="CHEBI:15377"/>
        <dbReference type="ChEBI" id="CHEBI:15378"/>
        <dbReference type="ChEBI" id="CHEBI:144029"/>
        <dbReference type="ChEBI" id="CHEBI:144051"/>
    </reaction>
    <physiologicalReaction direction="left-to-right" evidence="1">
        <dbReference type="Rhea" id="RHEA:60877"/>
    </physiologicalReaction>
</comment>
<comment type="catalytic activity">
    <reaction evidence="1">
        <text>NAD(+) + H2O = beta-nicotinamide D-ribonucleotide + AMP + 2 H(+)</text>
        <dbReference type="Rhea" id="RHEA:11800"/>
        <dbReference type="ChEBI" id="CHEBI:14649"/>
        <dbReference type="ChEBI" id="CHEBI:15377"/>
        <dbReference type="ChEBI" id="CHEBI:15378"/>
        <dbReference type="ChEBI" id="CHEBI:57540"/>
        <dbReference type="ChEBI" id="CHEBI:456215"/>
        <dbReference type="EC" id="3.6.1.22"/>
    </reaction>
</comment>
<comment type="catalytic activity">
    <reaction evidence="1">
        <text>NADH + H2O = reduced beta-nicotinamide D-ribonucleotide + AMP + 2 H(+)</text>
        <dbReference type="Rhea" id="RHEA:48868"/>
        <dbReference type="ChEBI" id="CHEBI:15377"/>
        <dbReference type="ChEBI" id="CHEBI:15378"/>
        <dbReference type="ChEBI" id="CHEBI:57945"/>
        <dbReference type="ChEBI" id="CHEBI:90832"/>
        <dbReference type="ChEBI" id="CHEBI:456215"/>
        <dbReference type="EC" id="3.6.1.22"/>
    </reaction>
</comment>
<comment type="cofactor">
    <cofactor evidence="1">
        <name>Mg(2+)</name>
        <dbReference type="ChEBI" id="CHEBI:18420"/>
    </cofactor>
    <cofactor evidence="1">
        <name>Mn(2+)</name>
        <dbReference type="ChEBI" id="CHEBI:29035"/>
    </cofactor>
    <text evidence="1">Divalent metal cations. Mg(2+) or Mn(2+).</text>
</comment>
<comment type="cofactor">
    <cofactor evidence="1">
        <name>Zn(2+)</name>
        <dbReference type="ChEBI" id="CHEBI:29105"/>
    </cofactor>
    <text evidence="1">Binds 1 zinc ion per subunit.</text>
</comment>
<comment type="subunit">
    <text evidence="1">Homodimer.</text>
</comment>
<comment type="similarity">
    <text evidence="1 2">Belongs to the Nudix hydrolase family. NudC subfamily.</text>
</comment>
<protein>
    <recommendedName>
        <fullName evidence="1">NAD-capped RNA hydrolase NudC</fullName>
        <shortName evidence="1">DeNADding enzyme NudC</shortName>
        <ecNumber evidence="1">3.6.1.-</ecNumber>
    </recommendedName>
    <alternativeName>
        <fullName evidence="1">NADH pyrophosphatase</fullName>
        <ecNumber evidence="1">3.6.1.22</ecNumber>
    </alternativeName>
</protein>
<accession>Q9KV27</accession>
<gene>
    <name evidence="1" type="primary">nudC</name>
    <name type="ordered locus">VC_0331</name>
</gene>
<name>NUDC_VIBCH</name>